<reference key="1">
    <citation type="journal article" date="1997" name="Gene">
        <title>Human syntaxin 7: a Pep12p/Vps6p homologue implicated in vesicle trafficking to lysosomes.</title>
        <authorList>
            <person name="Wang H."/>
            <person name="Frelin L."/>
            <person name="Pevsner J."/>
        </authorList>
    </citation>
    <scope>NUCLEOTIDE SEQUENCE [MRNA] (ISOFORM 1)</scope>
    <source>
        <tissue>Fetal brain</tissue>
    </source>
</reference>
<reference key="2">
    <citation type="journal article" date="2003" name="Nature">
        <title>The DNA sequence and analysis of human chromosome 6.</title>
        <authorList>
            <person name="Mungall A.J."/>
            <person name="Palmer S.A."/>
            <person name="Sims S.K."/>
            <person name="Edwards C.A."/>
            <person name="Ashurst J.L."/>
            <person name="Wilming L."/>
            <person name="Jones M.C."/>
            <person name="Horton R."/>
            <person name="Hunt S.E."/>
            <person name="Scott C.E."/>
            <person name="Gilbert J.G.R."/>
            <person name="Clamp M.E."/>
            <person name="Bethel G."/>
            <person name="Milne S."/>
            <person name="Ainscough R."/>
            <person name="Almeida J.P."/>
            <person name="Ambrose K.D."/>
            <person name="Andrews T.D."/>
            <person name="Ashwell R.I.S."/>
            <person name="Babbage A.K."/>
            <person name="Bagguley C.L."/>
            <person name="Bailey J."/>
            <person name="Banerjee R."/>
            <person name="Barker D.J."/>
            <person name="Barlow K.F."/>
            <person name="Bates K."/>
            <person name="Beare D.M."/>
            <person name="Beasley H."/>
            <person name="Beasley O."/>
            <person name="Bird C.P."/>
            <person name="Blakey S.E."/>
            <person name="Bray-Allen S."/>
            <person name="Brook J."/>
            <person name="Brown A.J."/>
            <person name="Brown J.Y."/>
            <person name="Burford D.C."/>
            <person name="Burrill W."/>
            <person name="Burton J."/>
            <person name="Carder C."/>
            <person name="Carter N.P."/>
            <person name="Chapman J.C."/>
            <person name="Clark S.Y."/>
            <person name="Clark G."/>
            <person name="Clee C.M."/>
            <person name="Clegg S."/>
            <person name="Cobley V."/>
            <person name="Collier R.E."/>
            <person name="Collins J.E."/>
            <person name="Colman L.K."/>
            <person name="Corby N.R."/>
            <person name="Coville G.J."/>
            <person name="Culley K.M."/>
            <person name="Dhami P."/>
            <person name="Davies J."/>
            <person name="Dunn M."/>
            <person name="Earthrowl M.E."/>
            <person name="Ellington A.E."/>
            <person name="Evans K.A."/>
            <person name="Faulkner L."/>
            <person name="Francis M.D."/>
            <person name="Frankish A."/>
            <person name="Frankland J."/>
            <person name="French L."/>
            <person name="Garner P."/>
            <person name="Garnett J."/>
            <person name="Ghori M.J."/>
            <person name="Gilby L.M."/>
            <person name="Gillson C.J."/>
            <person name="Glithero R.J."/>
            <person name="Grafham D.V."/>
            <person name="Grant M."/>
            <person name="Gribble S."/>
            <person name="Griffiths C."/>
            <person name="Griffiths M.N.D."/>
            <person name="Hall R."/>
            <person name="Halls K.S."/>
            <person name="Hammond S."/>
            <person name="Harley J.L."/>
            <person name="Hart E.A."/>
            <person name="Heath P.D."/>
            <person name="Heathcott R."/>
            <person name="Holmes S.J."/>
            <person name="Howden P.J."/>
            <person name="Howe K.L."/>
            <person name="Howell G.R."/>
            <person name="Huckle E."/>
            <person name="Humphray S.J."/>
            <person name="Humphries M.D."/>
            <person name="Hunt A.R."/>
            <person name="Johnson C.M."/>
            <person name="Joy A.A."/>
            <person name="Kay M."/>
            <person name="Keenan S.J."/>
            <person name="Kimberley A.M."/>
            <person name="King A."/>
            <person name="Laird G.K."/>
            <person name="Langford C."/>
            <person name="Lawlor S."/>
            <person name="Leongamornlert D.A."/>
            <person name="Leversha M."/>
            <person name="Lloyd C.R."/>
            <person name="Lloyd D.M."/>
            <person name="Loveland J.E."/>
            <person name="Lovell J."/>
            <person name="Martin S."/>
            <person name="Mashreghi-Mohammadi M."/>
            <person name="Maslen G.L."/>
            <person name="Matthews L."/>
            <person name="McCann O.T."/>
            <person name="McLaren S.J."/>
            <person name="McLay K."/>
            <person name="McMurray A."/>
            <person name="Moore M.J.F."/>
            <person name="Mullikin J.C."/>
            <person name="Niblett D."/>
            <person name="Nickerson T."/>
            <person name="Novik K.L."/>
            <person name="Oliver K."/>
            <person name="Overton-Larty E.K."/>
            <person name="Parker A."/>
            <person name="Patel R."/>
            <person name="Pearce A.V."/>
            <person name="Peck A.I."/>
            <person name="Phillimore B.J.C.T."/>
            <person name="Phillips S."/>
            <person name="Plumb R.W."/>
            <person name="Porter K.M."/>
            <person name="Ramsey Y."/>
            <person name="Ranby S.A."/>
            <person name="Rice C.M."/>
            <person name="Ross M.T."/>
            <person name="Searle S.M."/>
            <person name="Sehra H.K."/>
            <person name="Sheridan E."/>
            <person name="Skuce C.D."/>
            <person name="Smith S."/>
            <person name="Smith M."/>
            <person name="Spraggon L."/>
            <person name="Squares S.L."/>
            <person name="Steward C.A."/>
            <person name="Sycamore N."/>
            <person name="Tamlyn-Hall G."/>
            <person name="Tester J."/>
            <person name="Theaker A.J."/>
            <person name="Thomas D.W."/>
            <person name="Thorpe A."/>
            <person name="Tracey A."/>
            <person name="Tromans A."/>
            <person name="Tubby B."/>
            <person name="Wall M."/>
            <person name="Wallis J.M."/>
            <person name="West A.P."/>
            <person name="White S.S."/>
            <person name="Whitehead S.L."/>
            <person name="Whittaker H."/>
            <person name="Wild A."/>
            <person name="Willey D.J."/>
            <person name="Wilmer T.E."/>
            <person name="Wood J.M."/>
            <person name="Wray P.W."/>
            <person name="Wyatt J.C."/>
            <person name="Young L."/>
            <person name="Younger R.M."/>
            <person name="Bentley D.R."/>
            <person name="Coulson A."/>
            <person name="Durbin R.M."/>
            <person name="Hubbard T."/>
            <person name="Sulston J.E."/>
            <person name="Dunham I."/>
            <person name="Rogers J."/>
            <person name="Beck S."/>
        </authorList>
    </citation>
    <scope>NUCLEOTIDE SEQUENCE [LARGE SCALE GENOMIC DNA] (ISOFORMS 1 AND 2)</scope>
</reference>
<reference key="3">
    <citation type="submission" date="2005-09" db="EMBL/GenBank/DDBJ databases">
        <authorList>
            <person name="Mural R.J."/>
            <person name="Istrail S."/>
            <person name="Sutton G.G."/>
            <person name="Florea L."/>
            <person name="Halpern A.L."/>
            <person name="Mobarry C.M."/>
            <person name="Lippert R."/>
            <person name="Walenz B."/>
            <person name="Shatkay H."/>
            <person name="Dew I."/>
            <person name="Miller J.R."/>
            <person name="Flanigan M.J."/>
            <person name="Edwards N.J."/>
            <person name="Bolanos R."/>
            <person name="Fasulo D."/>
            <person name="Halldorsson B.V."/>
            <person name="Hannenhalli S."/>
            <person name="Turner R."/>
            <person name="Yooseph S."/>
            <person name="Lu F."/>
            <person name="Nusskern D.R."/>
            <person name="Shue B.C."/>
            <person name="Zheng X.H."/>
            <person name="Zhong F."/>
            <person name="Delcher A.L."/>
            <person name="Huson D.H."/>
            <person name="Kravitz S.A."/>
            <person name="Mouchard L."/>
            <person name="Reinert K."/>
            <person name="Remington K.A."/>
            <person name="Clark A.G."/>
            <person name="Waterman M.S."/>
            <person name="Eichler E.E."/>
            <person name="Adams M.D."/>
            <person name="Hunkapiller M.W."/>
            <person name="Myers E.W."/>
            <person name="Venter J.C."/>
        </authorList>
    </citation>
    <scope>NUCLEOTIDE SEQUENCE [LARGE SCALE GENOMIC DNA]</scope>
</reference>
<reference key="4">
    <citation type="journal article" date="2004" name="Genome Res.">
        <title>The status, quality, and expansion of the NIH full-length cDNA project: the Mammalian Gene Collection (MGC).</title>
        <authorList>
            <consortium name="The MGC Project Team"/>
        </authorList>
    </citation>
    <scope>NUCLEOTIDE SEQUENCE [LARGE SCALE MRNA] (ISOFORM 1)</scope>
    <source>
        <tissue>Ovary</tissue>
    </source>
</reference>
<reference key="5">
    <citation type="journal article" date="2003" name="Nat. Biotechnol.">
        <title>Exploring proteomes and analyzing protein processing by mass spectrometric identification of sorted N-terminal peptides.</title>
        <authorList>
            <person name="Gevaert K."/>
            <person name="Goethals M."/>
            <person name="Martens L."/>
            <person name="Van Damme J."/>
            <person name="Staes A."/>
            <person name="Thomas G.R."/>
            <person name="Vandekerckhove J."/>
        </authorList>
    </citation>
    <scope>PROTEIN SEQUENCE OF 2-17</scope>
    <scope>ACETYLATION AT SER-2</scope>
    <source>
        <tissue>Platelet</tissue>
    </source>
</reference>
<reference key="6">
    <citation type="journal article" date="1999" name="Mol. Biol. Cell">
        <title>Differential roles of syntaxin 7 and syntaxin 8 in endosomal trafficking.</title>
        <authorList>
            <person name="Prekeris R."/>
            <person name="Yang B."/>
            <person name="Oorschot V."/>
            <person name="Klumperman J."/>
            <person name="Scheller R.H."/>
        </authorList>
    </citation>
    <scope>CHARACTERIZATION</scope>
</reference>
<reference key="7">
    <citation type="journal article" date="2000" name="J. Biol. Chem.">
        <title>Syntaxin 7 mediates endocytic trafficking to late endosomes.</title>
        <authorList>
            <person name="Nakamura N."/>
            <person name="Yamamoto A."/>
            <person name="Wada Y."/>
            <person name="Futai M."/>
        </authorList>
    </citation>
    <scope>CHARACTERIZATION</scope>
</reference>
<reference key="8">
    <citation type="journal article" date="2001" name="J. Biol. Chem.">
        <title>Molecular characterization of mammalian homologues of class C Vps proteins that interact with syntaxin-7.</title>
        <authorList>
            <person name="Kim B.Y."/>
            <person name="Kraemer H."/>
            <person name="Yamamoto A."/>
            <person name="Kominami E."/>
            <person name="Kohsaka S."/>
            <person name="Akazawa C."/>
        </authorList>
    </citation>
    <scope>INTERACTION WITH VPS11; VPS16; VPS18 AND VPS33A</scope>
</reference>
<reference key="9">
    <citation type="journal article" date="2008" name="Proc. Natl. Acad. Sci. U.S.A.">
        <title>A quantitative atlas of mitotic phosphorylation.</title>
        <authorList>
            <person name="Dephoure N."/>
            <person name="Zhou C."/>
            <person name="Villen J."/>
            <person name="Beausoleil S.A."/>
            <person name="Bakalarski C.E."/>
            <person name="Elledge S.J."/>
            <person name="Gygi S.P."/>
        </authorList>
    </citation>
    <scope>PHOSPHORYLATION [LARGE SCALE ANALYSIS] AT SER-129</scope>
    <scope>IDENTIFICATION BY MASS SPECTROMETRY [LARGE SCALE ANALYSIS]</scope>
    <source>
        <tissue>Cervix carcinoma</tissue>
    </source>
</reference>
<reference key="10">
    <citation type="journal article" date="2009" name="Anal. Chem.">
        <title>Lys-N and trypsin cover complementary parts of the phosphoproteome in a refined SCX-based approach.</title>
        <authorList>
            <person name="Gauci S."/>
            <person name="Helbig A.O."/>
            <person name="Slijper M."/>
            <person name="Krijgsveld J."/>
            <person name="Heck A.J."/>
            <person name="Mohammed S."/>
        </authorList>
    </citation>
    <scope>ACETYLATION [LARGE SCALE ANALYSIS] AT SER-2</scope>
    <scope>CLEAVAGE OF INITIATOR METHIONINE [LARGE SCALE ANALYSIS]</scope>
    <scope>IDENTIFICATION BY MASS SPECTROMETRY [LARGE SCALE ANALYSIS]</scope>
</reference>
<reference key="11">
    <citation type="journal article" date="2009" name="Sci. Signal.">
        <title>Quantitative phosphoproteomic analysis of T cell receptor signaling reveals system-wide modulation of protein-protein interactions.</title>
        <authorList>
            <person name="Mayya V."/>
            <person name="Lundgren D.H."/>
            <person name="Hwang S.-I."/>
            <person name="Rezaul K."/>
            <person name="Wu L."/>
            <person name="Eng J.K."/>
            <person name="Rodionov V."/>
            <person name="Han D.K."/>
        </authorList>
    </citation>
    <scope>IDENTIFICATION BY MASS SPECTROMETRY [LARGE SCALE ANALYSIS]</scope>
    <source>
        <tissue>Leukemic T-cell</tissue>
    </source>
</reference>
<reference key="12">
    <citation type="journal article" date="2011" name="BMC Syst. Biol.">
        <title>Initial characterization of the human central proteome.</title>
        <authorList>
            <person name="Burkard T.R."/>
            <person name="Planyavsky M."/>
            <person name="Kaupe I."/>
            <person name="Breitwieser F.P."/>
            <person name="Buerckstuemmer T."/>
            <person name="Bennett K.L."/>
            <person name="Superti-Furga G."/>
            <person name="Colinge J."/>
        </authorList>
    </citation>
    <scope>IDENTIFICATION BY MASS SPECTROMETRY [LARGE SCALE ANALYSIS]</scope>
</reference>
<reference key="13">
    <citation type="journal article" date="2011" name="Sci. Signal.">
        <title>System-wide temporal characterization of the proteome and phosphoproteome of human embryonic stem cell differentiation.</title>
        <authorList>
            <person name="Rigbolt K.T."/>
            <person name="Prokhorova T.A."/>
            <person name="Akimov V."/>
            <person name="Henningsen J."/>
            <person name="Johansen P.T."/>
            <person name="Kratchmarova I."/>
            <person name="Kassem M."/>
            <person name="Mann M."/>
            <person name="Olsen J.V."/>
            <person name="Blagoev B."/>
        </authorList>
    </citation>
    <scope>PHOSPHORYLATION [LARGE SCALE ANALYSIS] AT SER-129</scope>
    <scope>IDENTIFICATION BY MASS SPECTROMETRY [LARGE SCALE ANALYSIS]</scope>
</reference>
<reference key="14">
    <citation type="journal article" date="2012" name="Mol. Cell. Proteomics">
        <title>Comparative large-scale characterisation of plant vs. mammal proteins reveals similar and idiosyncratic N-alpha acetylation features.</title>
        <authorList>
            <person name="Bienvenut W.V."/>
            <person name="Sumpton D."/>
            <person name="Martinez A."/>
            <person name="Lilla S."/>
            <person name="Espagne C."/>
            <person name="Meinnel T."/>
            <person name="Giglione C."/>
        </authorList>
    </citation>
    <scope>ACETYLATION [LARGE SCALE ANALYSIS] AT SER-2</scope>
    <scope>CLEAVAGE OF INITIATOR METHIONINE [LARGE SCALE ANALYSIS]</scope>
    <scope>IDENTIFICATION BY MASS SPECTROMETRY [LARGE SCALE ANALYSIS]</scope>
</reference>
<reference key="15">
    <citation type="journal article" date="2012" name="Proc. Natl. Acad. Sci. U.S.A.">
        <title>N-terminal acetylome analyses and functional insights of the N-terminal acetyltransferase NatB.</title>
        <authorList>
            <person name="Van Damme P."/>
            <person name="Lasa M."/>
            <person name="Polevoda B."/>
            <person name="Gazquez C."/>
            <person name="Elosegui-Artola A."/>
            <person name="Kim D.S."/>
            <person name="De Juan-Pardo E."/>
            <person name="Demeyer K."/>
            <person name="Hole K."/>
            <person name="Larrea E."/>
            <person name="Timmerman E."/>
            <person name="Prieto J."/>
            <person name="Arnesen T."/>
            <person name="Sherman F."/>
            <person name="Gevaert K."/>
            <person name="Aldabe R."/>
        </authorList>
    </citation>
    <scope>ACETYLATION [LARGE SCALE ANALYSIS] AT SER-2</scope>
    <scope>CLEAVAGE OF INITIATOR METHIONINE [LARGE SCALE ANALYSIS]</scope>
    <scope>IDENTIFICATION BY MASS SPECTROMETRY [LARGE SCALE ANALYSIS]</scope>
</reference>
<reference key="16">
    <citation type="journal article" date="2013" name="J. Proteome Res.">
        <title>Toward a comprehensive characterization of a human cancer cell phosphoproteome.</title>
        <authorList>
            <person name="Zhou H."/>
            <person name="Di Palma S."/>
            <person name="Preisinger C."/>
            <person name="Peng M."/>
            <person name="Polat A.N."/>
            <person name="Heck A.J."/>
            <person name="Mohammed S."/>
        </authorList>
    </citation>
    <scope>PHOSPHORYLATION [LARGE SCALE ANALYSIS] AT THR-4; SER-45; SER-75; SER-126 AND SER-129</scope>
    <scope>IDENTIFICATION BY MASS SPECTROMETRY [LARGE SCALE ANALYSIS]</scope>
    <source>
        <tissue>Cervix carcinoma</tissue>
        <tissue>Erythroleukemia</tissue>
    </source>
</reference>
<reference key="17">
    <citation type="journal article" date="2014" name="J. Proteomics">
        <title>An enzyme assisted RP-RPLC approach for in-depth analysis of human liver phosphoproteome.</title>
        <authorList>
            <person name="Bian Y."/>
            <person name="Song C."/>
            <person name="Cheng K."/>
            <person name="Dong M."/>
            <person name="Wang F."/>
            <person name="Huang J."/>
            <person name="Sun D."/>
            <person name="Wang L."/>
            <person name="Ye M."/>
            <person name="Zou H."/>
        </authorList>
    </citation>
    <scope>PHOSPHORYLATION [LARGE SCALE ANALYSIS] AT SER-205</scope>
    <scope>IDENTIFICATION BY MASS SPECTROMETRY [LARGE SCALE ANALYSIS]</scope>
    <source>
        <tissue>Liver</tissue>
    </source>
</reference>
<reference key="18">
    <citation type="journal article" date="2015" name="Proteomics">
        <title>N-terminome analysis of the human mitochondrial proteome.</title>
        <authorList>
            <person name="Vaca Jacome A.S."/>
            <person name="Rabilloud T."/>
            <person name="Schaeffer-Reiss C."/>
            <person name="Rompais M."/>
            <person name="Ayoub D."/>
            <person name="Lane L."/>
            <person name="Bairoch A."/>
            <person name="Van Dorsselaer A."/>
            <person name="Carapito C."/>
        </authorList>
    </citation>
    <scope>ACETYLATION [LARGE SCALE ANALYSIS] AT SER-2</scope>
    <scope>CLEAVAGE OF INITIATOR METHIONINE [LARGE SCALE ANALYSIS]</scope>
    <scope>IDENTIFICATION BY MASS SPECTROMETRY [LARGE SCALE ANALYSIS]</scope>
</reference>
<feature type="initiator methionine" description="Removed" evidence="7 10 12 13 16">
    <location>
        <position position="1"/>
    </location>
</feature>
<feature type="chain" id="PRO_0000210213" description="Syntaxin-7">
    <location>
        <begin position="2"/>
        <end position="261"/>
    </location>
</feature>
<feature type="topological domain" description="Cytoplasmic" evidence="3">
    <location>
        <begin position="2"/>
        <end position="238"/>
    </location>
</feature>
<feature type="transmembrane region" description="Helical; Anchor for type IV membrane protein" evidence="3">
    <location>
        <begin position="239"/>
        <end position="259"/>
    </location>
</feature>
<feature type="topological domain" description="Vesicular" evidence="3">
    <location>
        <begin position="260"/>
        <end position="261"/>
    </location>
</feature>
<feature type="domain" description="t-SNARE coiled-coil homology" evidence="4">
    <location>
        <begin position="165"/>
        <end position="227"/>
    </location>
</feature>
<feature type="region of interest" description="Disordered" evidence="5">
    <location>
        <begin position="129"/>
        <end position="148"/>
    </location>
</feature>
<feature type="coiled-coil region" evidence="3">
    <location>
        <begin position="47"/>
        <end position="69"/>
    </location>
</feature>
<feature type="modified residue" description="N-acetylserine" evidence="7 10 12 13 16">
    <location>
        <position position="2"/>
    </location>
</feature>
<feature type="modified residue" description="Phosphothreonine" evidence="14">
    <location>
        <position position="4"/>
    </location>
</feature>
<feature type="modified residue" description="Phosphoserine" evidence="14">
    <location>
        <position position="45"/>
    </location>
</feature>
<feature type="modified residue" description="Phosphoserine" evidence="14">
    <location>
        <position position="75"/>
    </location>
</feature>
<feature type="modified residue" description="Phosphothreonine" evidence="2">
    <location>
        <position position="79"/>
    </location>
</feature>
<feature type="modified residue" description="Phosphoserine" evidence="2">
    <location>
        <position position="125"/>
    </location>
</feature>
<feature type="modified residue" description="Phosphoserine" evidence="14">
    <location>
        <position position="126"/>
    </location>
</feature>
<feature type="modified residue" description="Phosphoserine" evidence="9 11 14">
    <location>
        <position position="129"/>
    </location>
</feature>
<feature type="modified residue" description="Phosphoserine" evidence="15">
    <location>
        <position position="205"/>
    </location>
</feature>
<feature type="splice variant" id="VSP_012938" description="In isoform 2." evidence="8">
    <original>RKSRKTLCIIILILVIGVAIISLIIWGLNH</original>
    <variation>KKDSCMLM</variation>
    <location>
        <begin position="232"/>
        <end position="261"/>
    </location>
</feature>
<feature type="sequence conflict" description="In Ref. 1; AAC51851." evidence="8" ref="1">
    <original>A</original>
    <variation>T</variation>
    <location>
        <position position="12"/>
    </location>
</feature>
<gene>
    <name type="primary">STX7</name>
</gene>
<keyword id="KW-0007">Acetylation</keyword>
<keyword id="KW-0025">Alternative splicing</keyword>
<keyword id="KW-0175">Coiled coil</keyword>
<keyword id="KW-0903">Direct protein sequencing</keyword>
<keyword id="KW-0967">Endosome</keyword>
<keyword id="KW-0472">Membrane</keyword>
<keyword id="KW-0597">Phosphoprotein</keyword>
<keyword id="KW-1267">Proteomics identification</keyword>
<keyword id="KW-1185">Reference proteome</keyword>
<keyword id="KW-0812">Transmembrane</keyword>
<keyword id="KW-1133">Transmembrane helix</keyword>
<name>STX7_HUMAN</name>
<protein>
    <recommendedName>
        <fullName>Syntaxin-7</fullName>
    </recommendedName>
</protein>
<accession>O15400</accession>
<accession>E1P579</accession>
<accession>Q5SZW2</accession>
<accession>Q96ES9</accession>
<evidence type="ECO:0000250" key="1"/>
<evidence type="ECO:0000250" key="2">
    <source>
        <dbReference type="UniProtKB" id="O70439"/>
    </source>
</evidence>
<evidence type="ECO:0000255" key="3"/>
<evidence type="ECO:0000255" key="4">
    <source>
        <dbReference type="PROSITE-ProRule" id="PRU00202"/>
    </source>
</evidence>
<evidence type="ECO:0000256" key="5">
    <source>
        <dbReference type="SAM" id="MobiDB-lite"/>
    </source>
</evidence>
<evidence type="ECO:0000269" key="6">
    <source>
    </source>
</evidence>
<evidence type="ECO:0000269" key="7">
    <source>
    </source>
</evidence>
<evidence type="ECO:0000305" key="8"/>
<evidence type="ECO:0007744" key="9">
    <source>
    </source>
</evidence>
<evidence type="ECO:0007744" key="10">
    <source>
    </source>
</evidence>
<evidence type="ECO:0007744" key="11">
    <source>
    </source>
</evidence>
<evidence type="ECO:0007744" key="12">
    <source>
    </source>
</evidence>
<evidence type="ECO:0007744" key="13">
    <source>
    </source>
</evidence>
<evidence type="ECO:0007744" key="14">
    <source>
    </source>
</evidence>
<evidence type="ECO:0007744" key="15">
    <source>
    </source>
</evidence>
<evidence type="ECO:0007744" key="16">
    <source>
    </source>
</evidence>
<organism>
    <name type="scientific">Homo sapiens</name>
    <name type="common">Human</name>
    <dbReference type="NCBI Taxonomy" id="9606"/>
    <lineage>
        <taxon>Eukaryota</taxon>
        <taxon>Metazoa</taxon>
        <taxon>Chordata</taxon>
        <taxon>Craniata</taxon>
        <taxon>Vertebrata</taxon>
        <taxon>Euteleostomi</taxon>
        <taxon>Mammalia</taxon>
        <taxon>Eutheria</taxon>
        <taxon>Euarchontoglires</taxon>
        <taxon>Primates</taxon>
        <taxon>Haplorrhini</taxon>
        <taxon>Catarrhini</taxon>
        <taxon>Hominidae</taxon>
        <taxon>Homo</taxon>
    </lineage>
</organism>
<proteinExistence type="evidence at protein level"/>
<dbReference type="EMBL" id="U77942">
    <property type="protein sequence ID" value="AAC51851.1"/>
    <property type="molecule type" value="mRNA"/>
</dbReference>
<dbReference type="EMBL" id="AL357034">
    <property type="status" value="NOT_ANNOTATED_CDS"/>
    <property type="molecule type" value="Genomic_DNA"/>
</dbReference>
<dbReference type="EMBL" id="AL589691">
    <property type="status" value="NOT_ANNOTATED_CDS"/>
    <property type="molecule type" value="Genomic_DNA"/>
</dbReference>
<dbReference type="EMBL" id="CH471051">
    <property type="protein sequence ID" value="EAW48029.1"/>
    <property type="molecule type" value="Genomic_DNA"/>
</dbReference>
<dbReference type="EMBL" id="CH471051">
    <property type="protein sequence ID" value="EAW48030.1"/>
    <property type="molecule type" value="Genomic_DNA"/>
</dbReference>
<dbReference type="EMBL" id="BC011975">
    <property type="protein sequence ID" value="AAH11975.1"/>
    <property type="molecule type" value="mRNA"/>
</dbReference>
<dbReference type="CCDS" id="CCDS5153.1">
    <molecule id="O15400-1"/>
</dbReference>
<dbReference type="CCDS" id="CCDS87441.1">
    <molecule id="O15400-2"/>
</dbReference>
<dbReference type="RefSeq" id="NP_001313507.1">
    <molecule id="O15400-1"/>
    <property type="nucleotide sequence ID" value="NM_001326578.2"/>
</dbReference>
<dbReference type="RefSeq" id="NP_001313508.1">
    <molecule id="O15400-1"/>
    <property type="nucleotide sequence ID" value="NM_001326579.2"/>
</dbReference>
<dbReference type="RefSeq" id="NP_001313509.1">
    <molecule id="O15400-2"/>
    <property type="nucleotide sequence ID" value="NM_001326580.2"/>
</dbReference>
<dbReference type="RefSeq" id="NP_003560.2">
    <molecule id="O15400-1"/>
    <property type="nucleotide sequence ID" value="NM_003569.3"/>
</dbReference>
<dbReference type="RefSeq" id="XP_011534480.1">
    <property type="nucleotide sequence ID" value="XM_011536178.1"/>
</dbReference>
<dbReference type="SMR" id="O15400"/>
<dbReference type="BioGRID" id="114003">
    <property type="interactions" value="668"/>
</dbReference>
<dbReference type="CORUM" id="O15400"/>
<dbReference type="DIP" id="DIP-57384N"/>
<dbReference type="FunCoup" id="O15400">
    <property type="interactions" value="2107"/>
</dbReference>
<dbReference type="IntAct" id="O15400">
    <property type="interactions" value="177"/>
</dbReference>
<dbReference type="MINT" id="O15400"/>
<dbReference type="STRING" id="9606.ENSP00000356918"/>
<dbReference type="GlyGen" id="O15400">
    <property type="glycosylation" value="1 site, 1 O-linked glycan (1 site)"/>
</dbReference>
<dbReference type="iPTMnet" id="O15400"/>
<dbReference type="PhosphoSitePlus" id="O15400"/>
<dbReference type="SwissPalm" id="O15400"/>
<dbReference type="BioMuta" id="STX7"/>
<dbReference type="OGP" id="O15400"/>
<dbReference type="jPOST" id="O15400"/>
<dbReference type="MassIVE" id="O15400"/>
<dbReference type="PaxDb" id="9606-ENSP00000356918"/>
<dbReference type="PeptideAtlas" id="O15400"/>
<dbReference type="ProteomicsDB" id="48639">
    <molecule id="O15400-1"/>
</dbReference>
<dbReference type="ProteomicsDB" id="48640">
    <molecule id="O15400-2"/>
</dbReference>
<dbReference type="TopDownProteomics" id="O15400-1">
    <molecule id="O15400-1"/>
</dbReference>
<dbReference type="Antibodypedia" id="729">
    <property type="antibodies" value="178 antibodies from 28 providers"/>
</dbReference>
<dbReference type="DNASU" id="8417"/>
<dbReference type="Ensembl" id="ENST00000367937.4">
    <molecule id="O15400-2"/>
    <property type="protein sequence ID" value="ENSP00000356914.4"/>
    <property type="gene ID" value="ENSG00000079950.14"/>
</dbReference>
<dbReference type="Ensembl" id="ENST00000367941.7">
    <molecule id="O15400-1"/>
    <property type="protein sequence ID" value="ENSP00000356918.1"/>
    <property type="gene ID" value="ENSG00000079950.14"/>
</dbReference>
<dbReference type="GeneID" id="8417"/>
<dbReference type="KEGG" id="hsa:8417"/>
<dbReference type="MANE-Select" id="ENST00000367941.7">
    <property type="protein sequence ID" value="ENSP00000356918.1"/>
    <property type="RefSeq nucleotide sequence ID" value="NM_003569.3"/>
    <property type="RefSeq protein sequence ID" value="NP_003560.2"/>
</dbReference>
<dbReference type="UCSC" id="uc003qdg.3">
    <molecule id="O15400-1"/>
    <property type="organism name" value="human"/>
</dbReference>
<dbReference type="AGR" id="HGNC:11442"/>
<dbReference type="CTD" id="8417"/>
<dbReference type="DisGeNET" id="8417"/>
<dbReference type="GeneCards" id="STX7"/>
<dbReference type="HGNC" id="HGNC:11442">
    <property type="gene designation" value="STX7"/>
</dbReference>
<dbReference type="HPA" id="ENSG00000079950">
    <property type="expression patterns" value="Low tissue specificity"/>
</dbReference>
<dbReference type="MIM" id="603217">
    <property type="type" value="gene"/>
</dbReference>
<dbReference type="neXtProt" id="NX_O15400"/>
<dbReference type="OpenTargets" id="ENSG00000079950"/>
<dbReference type="PharmGKB" id="PA36239"/>
<dbReference type="VEuPathDB" id="HostDB:ENSG00000079950"/>
<dbReference type="eggNOG" id="KOG0811">
    <property type="taxonomic scope" value="Eukaryota"/>
</dbReference>
<dbReference type="GeneTree" id="ENSGT01000000214440"/>
<dbReference type="HOGENOM" id="CLU_059257_1_1_1"/>
<dbReference type="InParanoid" id="O15400"/>
<dbReference type="OMA" id="LMTYTKQ"/>
<dbReference type="OrthoDB" id="364348at2759"/>
<dbReference type="PAN-GO" id="O15400">
    <property type="GO annotations" value="9 GO annotations based on evolutionary models"/>
</dbReference>
<dbReference type="PhylomeDB" id="O15400"/>
<dbReference type="TreeFam" id="TF315607"/>
<dbReference type="PathwayCommons" id="O15400"/>
<dbReference type="SignaLink" id="O15400"/>
<dbReference type="BioGRID-ORCS" id="8417">
    <property type="hits" value="11 hits in 1158 CRISPR screens"/>
</dbReference>
<dbReference type="CD-CODE" id="FB4E32DD">
    <property type="entry name" value="Presynaptic clusters and postsynaptic densities"/>
</dbReference>
<dbReference type="ChiTaRS" id="STX7">
    <property type="organism name" value="human"/>
</dbReference>
<dbReference type="GeneWiki" id="STX7"/>
<dbReference type="GenomeRNAi" id="8417"/>
<dbReference type="Pharos" id="O15400">
    <property type="development level" value="Tbio"/>
</dbReference>
<dbReference type="PRO" id="PR:O15400"/>
<dbReference type="Proteomes" id="UP000005640">
    <property type="component" value="Chromosome 6"/>
</dbReference>
<dbReference type="RNAct" id="O15400">
    <property type="molecule type" value="protein"/>
</dbReference>
<dbReference type="Bgee" id="ENSG00000079950">
    <property type="expression patterns" value="Expressed in cortical plate and 209 other cell types or tissues"/>
</dbReference>
<dbReference type="GO" id="GO:0042582">
    <property type="term" value="C:azurophil granule"/>
    <property type="evidence" value="ECO:0000314"/>
    <property type="project" value="UniProtKB"/>
</dbReference>
<dbReference type="GO" id="GO:0005769">
    <property type="term" value="C:early endosome"/>
    <property type="evidence" value="ECO:0000314"/>
    <property type="project" value="UniProtKB"/>
</dbReference>
<dbReference type="GO" id="GO:0031901">
    <property type="term" value="C:early endosome membrane"/>
    <property type="evidence" value="ECO:0007669"/>
    <property type="project" value="UniProtKB-SubCell"/>
</dbReference>
<dbReference type="GO" id="GO:0030139">
    <property type="term" value="C:endocytic vesicle"/>
    <property type="evidence" value="ECO:0000314"/>
    <property type="project" value="UniProtKB"/>
</dbReference>
<dbReference type="GO" id="GO:0012505">
    <property type="term" value="C:endomembrane system"/>
    <property type="evidence" value="ECO:0000318"/>
    <property type="project" value="GO_Central"/>
</dbReference>
<dbReference type="GO" id="GO:0005768">
    <property type="term" value="C:endosome"/>
    <property type="evidence" value="ECO:0000314"/>
    <property type="project" value="UniProtKB"/>
</dbReference>
<dbReference type="GO" id="GO:0070062">
    <property type="term" value="C:extracellular exosome"/>
    <property type="evidence" value="ECO:0007005"/>
    <property type="project" value="UniProtKB"/>
</dbReference>
<dbReference type="GO" id="GO:0001772">
    <property type="term" value="C:immunological synapse"/>
    <property type="evidence" value="ECO:0000314"/>
    <property type="project" value="UniProtKB"/>
</dbReference>
<dbReference type="GO" id="GO:0005770">
    <property type="term" value="C:late endosome"/>
    <property type="evidence" value="ECO:0000314"/>
    <property type="project" value="UniProtKB"/>
</dbReference>
<dbReference type="GO" id="GO:0005765">
    <property type="term" value="C:lysosomal membrane"/>
    <property type="evidence" value="ECO:0007005"/>
    <property type="project" value="UniProtKB"/>
</dbReference>
<dbReference type="GO" id="GO:0005764">
    <property type="term" value="C:lysosome"/>
    <property type="evidence" value="ECO:0000314"/>
    <property type="project" value="UniProtKB"/>
</dbReference>
<dbReference type="GO" id="GO:0048471">
    <property type="term" value="C:perinuclear region of cytoplasm"/>
    <property type="evidence" value="ECO:0000314"/>
    <property type="project" value="UniProtKB"/>
</dbReference>
<dbReference type="GO" id="GO:0005886">
    <property type="term" value="C:plasma membrane"/>
    <property type="evidence" value="ECO:0000314"/>
    <property type="project" value="UniProtKB"/>
</dbReference>
<dbReference type="GO" id="GO:0055037">
    <property type="term" value="C:recycling endosome"/>
    <property type="evidence" value="ECO:0000314"/>
    <property type="project" value="UniProtKB"/>
</dbReference>
<dbReference type="GO" id="GO:0031201">
    <property type="term" value="C:SNARE complex"/>
    <property type="evidence" value="ECO:0000318"/>
    <property type="project" value="GO_Central"/>
</dbReference>
<dbReference type="GO" id="GO:0008021">
    <property type="term" value="C:synaptic vesicle"/>
    <property type="evidence" value="ECO:0000318"/>
    <property type="project" value="GO_Central"/>
</dbReference>
<dbReference type="GO" id="GO:0070820">
    <property type="term" value="C:tertiary granule"/>
    <property type="evidence" value="ECO:0000314"/>
    <property type="project" value="UniProtKB"/>
</dbReference>
<dbReference type="GO" id="GO:0031982">
    <property type="term" value="C:vesicle"/>
    <property type="evidence" value="ECO:0000314"/>
    <property type="project" value="UniProtKB"/>
</dbReference>
<dbReference type="GO" id="GO:0019869">
    <property type="term" value="F:chloride channel inhibitor activity"/>
    <property type="evidence" value="ECO:0000314"/>
    <property type="project" value="UniProtKB"/>
</dbReference>
<dbReference type="GO" id="GO:0005484">
    <property type="term" value="F:SNAP receptor activity"/>
    <property type="evidence" value="ECO:0000318"/>
    <property type="project" value="GO_Central"/>
</dbReference>
<dbReference type="GO" id="GO:0000149">
    <property type="term" value="F:SNARE binding"/>
    <property type="evidence" value="ECO:0000314"/>
    <property type="project" value="MGI"/>
</dbReference>
<dbReference type="GO" id="GO:0019905">
    <property type="term" value="F:syntaxin binding"/>
    <property type="evidence" value="ECO:0000353"/>
    <property type="project" value="UniProtKB"/>
</dbReference>
<dbReference type="GO" id="GO:0006886">
    <property type="term" value="P:intracellular protein transport"/>
    <property type="evidence" value="ECO:0000318"/>
    <property type="project" value="GO_Central"/>
</dbReference>
<dbReference type="GO" id="GO:0070925">
    <property type="term" value="P:organelle assembly"/>
    <property type="evidence" value="ECO:0000314"/>
    <property type="project" value="UniProtKB"/>
</dbReference>
<dbReference type="GO" id="GO:0051640">
    <property type="term" value="P:organelle localization"/>
    <property type="evidence" value="ECO:0000314"/>
    <property type="project" value="UniProtKB"/>
</dbReference>
<dbReference type="GO" id="GO:1902685">
    <property type="term" value="P:positive regulation of receptor localization to synapse"/>
    <property type="evidence" value="ECO:0000315"/>
    <property type="project" value="UniProtKB"/>
</dbReference>
<dbReference type="GO" id="GO:0001916">
    <property type="term" value="P:positive regulation of T cell mediated cytotoxicity"/>
    <property type="evidence" value="ECO:0000315"/>
    <property type="project" value="UniProtKB"/>
</dbReference>
<dbReference type="GO" id="GO:1903076">
    <property type="term" value="P:regulation of protein localization to plasma membrane"/>
    <property type="evidence" value="ECO:0000314"/>
    <property type="project" value="UniProtKB"/>
</dbReference>
<dbReference type="GO" id="GO:0048278">
    <property type="term" value="P:vesicle docking"/>
    <property type="evidence" value="ECO:0000318"/>
    <property type="project" value="GO_Central"/>
</dbReference>
<dbReference type="GO" id="GO:0006906">
    <property type="term" value="P:vesicle fusion"/>
    <property type="evidence" value="ECO:0000318"/>
    <property type="project" value="GO_Central"/>
</dbReference>
<dbReference type="CDD" id="cd15875">
    <property type="entry name" value="SNARE_syntaxin7"/>
    <property type="match status" value="1"/>
</dbReference>
<dbReference type="CDD" id="cd00179">
    <property type="entry name" value="SynN"/>
    <property type="match status" value="1"/>
</dbReference>
<dbReference type="FunFam" id="1.20.5.110:FF:000016">
    <property type="entry name" value="Syntaxin 12"/>
    <property type="match status" value="1"/>
</dbReference>
<dbReference type="FunFam" id="1.20.58.70:FF:000006">
    <property type="entry name" value="Syntaxin 7"/>
    <property type="match status" value="1"/>
</dbReference>
<dbReference type="Gene3D" id="1.20.5.110">
    <property type="match status" value="1"/>
</dbReference>
<dbReference type="Gene3D" id="1.20.58.70">
    <property type="match status" value="1"/>
</dbReference>
<dbReference type="InterPro" id="IPR010989">
    <property type="entry name" value="SNARE"/>
</dbReference>
<dbReference type="InterPro" id="IPR045242">
    <property type="entry name" value="Syntaxin"/>
</dbReference>
<dbReference type="InterPro" id="IPR006012">
    <property type="entry name" value="Syntaxin/epimorphin_CS"/>
</dbReference>
<dbReference type="InterPro" id="IPR006011">
    <property type="entry name" value="Syntaxin_N"/>
</dbReference>
<dbReference type="InterPro" id="IPR000727">
    <property type="entry name" value="T_SNARE_dom"/>
</dbReference>
<dbReference type="PANTHER" id="PTHR19957">
    <property type="entry name" value="SYNTAXIN"/>
    <property type="match status" value="1"/>
</dbReference>
<dbReference type="PANTHER" id="PTHR19957:SF90">
    <property type="entry name" value="SYNTAXIN-7"/>
    <property type="match status" value="1"/>
</dbReference>
<dbReference type="Pfam" id="PF05739">
    <property type="entry name" value="SNARE"/>
    <property type="match status" value="1"/>
</dbReference>
<dbReference type="Pfam" id="PF14523">
    <property type="entry name" value="Syntaxin_2"/>
    <property type="match status" value="1"/>
</dbReference>
<dbReference type="SMART" id="SM00503">
    <property type="entry name" value="SynN"/>
    <property type="match status" value="1"/>
</dbReference>
<dbReference type="SMART" id="SM00397">
    <property type="entry name" value="t_SNARE"/>
    <property type="match status" value="1"/>
</dbReference>
<dbReference type="SUPFAM" id="SSF47661">
    <property type="entry name" value="t-snare proteins"/>
    <property type="match status" value="1"/>
</dbReference>
<dbReference type="PROSITE" id="PS00914">
    <property type="entry name" value="SYNTAXIN"/>
    <property type="match status" value="1"/>
</dbReference>
<dbReference type="PROSITE" id="PS50192">
    <property type="entry name" value="T_SNARE"/>
    <property type="match status" value="1"/>
</dbReference>
<comment type="function">
    <text>May be involved in protein trafficking from the plasma membrane to the early endosome (EE) as well as in homotypic fusion of endocytic organelles. Mediates the endocytic trafficking from early endosomes to late endosomes and lysosomes.</text>
</comment>
<comment type="subunit">
    <text evidence="1 2 6">Forms a SNARE complex with VTI1B, STX8 and VAMP8 which functions in the homotypic fusion of late endosomes. Component of the SNARE complex composed of STX7, STX8, VAMP7 and VTI1B that is required for heterotypic fusion of late endosomes with lysosomes (By similarity). Interacts with VPS11, VPS16 and VPS18. Interacts with VPS33A. Interacts with TPC1 (By similarity).</text>
</comment>
<comment type="interaction">
    <interactant intactId="EBI-3221827">
        <id>O15400</id>
    </interactant>
    <interactant intactId="EBI-7054139">
        <id>Q68DC2</id>
        <label>ANKS6</label>
    </interactant>
    <organismsDiffer>false</organismsDiffer>
    <experiments>3</experiments>
</comment>
<comment type="interaction">
    <interactant intactId="EBI-3221827">
        <id>O15400</id>
    </interactant>
    <interactant intactId="EBI-13059134">
        <id>Q13520</id>
        <label>AQP6</label>
    </interactant>
    <organismsDiffer>false</organismsDiffer>
    <experiments>3</experiments>
</comment>
<comment type="interaction">
    <interactant intactId="EBI-3221827">
        <id>O15400</id>
    </interactant>
    <interactant intactId="EBI-11343438">
        <id>Q3SXY8</id>
        <label>ARL13B</label>
    </interactant>
    <organismsDiffer>false</organismsDiffer>
    <experiments>3</experiments>
</comment>
<comment type="interaction">
    <interactant intactId="EBI-3221827">
        <id>O15400</id>
    </interactant>
    <interactant intactId="EBI-2622997">
        <id>Q9HA82</id>
        <label>CERS4</label>
    </interactant>
    <organismsDiffer>false</organismsDiffer>
    <experiments>3</experiments>
</comment>
<comment type="interaction">
    <interactant intactId="EBI-3221827">
        <id>O15400</id>
    </interactant>
    <interactant intactId="EBI-1045797">
        <id>Q8N5K1</id>
        <label>CISD2</label>
    </interactant>
    <organismsDiffer>false</organismsDiffer>
    <experiments>3</experiments>
</comment>
<comment type="interaction">
    <interactant intactId="EBI-3221827">
        <id>O15400</id>
    </interactant>
    <interactant intactId="EBI-6942903">
        <id>Q96BA8</id>
        <label>CREB3L1</label>
    </interactant>
    <organismsDiffer>false</organismsDiffer>
    <experiments>5</experiments>
</comment>
<comment type="interaction">
    <interactant intactId="EBI-3221827">
        <id>O15400</id>
    </interactant>
    <interactant intactId="EBI-8637742">
        <id>Q53TN4</id>
        <label>CYBRD1</label>
    </interactant>
    <organismsDiffer>false</organismsDiffer>
    <experiments>3</experiments>
</comment>
<comment type="interaction">
    <interactant intactId="EBI-3221827">
        <id>O15400</id>
    </interactant>
    <interactant intactId="EBI-3915253">
        <id>Q15125</id>
        <label>EBP</label>
    </interactant>
    <organismsDiffer>false</organismsDiffer>
    <experiments>3</experiments>
</comment>
<comment type="interaction">
    <interactant intactId="EBI-3221827">
        <id>O15400</id>
    </interactant>
    <interactant intactId="EBI-11037623">
        <id>Q9NYP7</id>
        <label>ELOVL5</label>
    </interactant>
    <organismsDiffer>false</organismsDiffer>
    <experiments>3</experiments>
</comment>
<comment type="interaction">
    <interactant intactId="EBI-3221827">
        <id>O15400</id>
    </interactant>
    <interactant intactId="EBI-18636064">
        <id>Q8TBP5</id>
        <label>FAM174A</label>
    </interactant>
    <organismsDiffer>false</organismsDiffer>
    <experiments>3</experiments>
</comment>
<comment type="interaction">
    <interactant intactId="EBI-3221827">
        <id>O15400</id>
    </interactant>
    <interactant intactId="EBI-18938272">
        <id>Q96KR6</id>
        <label>FAM210B</label>
    </interactant>
    <organismsDiffer>false</organismsDiffer>
    <experiments>3</experiments>
</comment>
<comment type="interaction">
    <interactant intactId="EBI-3221827">
        <id>O15400</id>
    </interactant>
    <interactant intactId="EBI-3918971">
        <id>Q9Y680</id>
        <label>FKBP7</label>
    </interactant>
    <organismsDiffer>false</organismsDiffer>
    <experiments>3</experiments>
</comment>
<comment type="interaction">
    <interactant intactId="EBI-3221827">
        <id>O15400</id>
    </interactant>
    <interactant intactId="EBI-20110678">
        <id>Q8NFK1</id>
        <label>GJC3</label>
    </interactant>
    <organismsDiffer>false</organismsDiffer>
    <experiments>3</experiments>
</comment>
<comment type="interaction">
    <interactant intactId="EBI-3221827">
        <id>O15400</id>
    </interactant>
    <interactant intactId="EBI-1052304">
        <id>Q8NBQ5</id>
        <label>HSD17B11</label>
    </interactant>
    <organismsDiffer>false</organismsDiffer>
    <experiments>3</experiments>
</comment>
<comment type="interaction">
    <interactant intactId="EBI-3221827">
        <id>O15400</id>
    </interactant>
    <interactant intactId="EBI-18053395">
        <id>Q7Z5P4</id>
        <label>HSD17B13</label>
    </interactant>
    <organismsDiffer>false</organismsDiffer>
    <experiments>3</experiments>
</comment>
<comment type="interaction">
    <interactant intactId="EBI-3221827">
        <id>O15400</id>
    </interactant>
    <interactant intactId="EBI-10266796">
        <id>Q8N5M9</id>
        <label>JAGN1</label>
    </interactant>
    <organismsDiffer>false</organismsDiffer>
    <experiments>3</experiments>
</comment>
<comment type="interaction">
    <interactant intactId="EBI-3221827">
        <id>O15400</id>
    </interactant>
    <interactant intactId="EBI-2830566">
        <id>Q9H400</id>
        <label>LIME1</label>
    </interactant>
    <organismsDiffer>false</organismsDiffer>
    <experiments>3</experiments>
</comment>
<comment type="interaction">
    <interactant intactId="EBI-3221827">
        <id>O15400</id>
    </interactant>
    <interactant intactId="EBI-10264855">
        <id>Q8N112</id>
        <label>LSMEM2</label>
    </interactant>
    <organismsDiffer>false</organismsDiffer>
    <experiments>4</experiments>
</comment>
<comment type="interaction">
    <interactant intactId="EBI-3221827">
        <id>O15400</id>
    </interactant>
    <interactant intactId="EBI-11956541">
        <id>Q9GZY8-5</id>
        <label>MFF</label>
    </interactant>
    <organismsDiffer>false</organismsDiffer>
    <experiments>3</experiments>
</comment>
<comment type="interaction">
    <interactant intactId="EBI-3221827">
        <id>O15400</id>
    </interactant>
    <interactant intactId="EBI-724754">
        <id>O14880</id>
        <label>MGST3</label>
    </interactant>
    <organismsDiffer>false</organismsDiffer>
    <experiments>3</experiments>
</comment>
<comment type="interaction">
    <interactant intactId="EBI-3221827">
        <id>O15400</id>
    </interactant>
    <interactant intactId="EBI-5454865">
        <id>Q6IN84</id>
        <label>MRM1</label>
    </interactant>
    <organismsDiffer>false</organismsDiffer>
    <experiments>3</experiments>
</comment>
<comment type="interaction">
    <interactant intactId="EBI-3221827">
        <id>O15400</id>
    </interactant>
    <interactant intactId="EBI-18051665">
        <id>Q9ULD2-3</id>
        <label>MTUS1</label>
    </interactant>
    <organismsDiffer>false</organismsDiffer>
    <experiments>3</experiments>
</comment>
<comment type="interaction">
    <interactant intactId="EBI-3221827">
        <id>O15400</id>
    </interactant>
    <interactant intactId="EBI-1644241">
        <id>Q9H902</id>
        <label>REEP1</label>
    </interactant>
    <organismsDiffer>false</organismsDiffer>
    <experiments>3</experiments>
</comment>
<comment type="interaction">
    <interactant intactId="EBI-3221827">
        <id>O15400</id>
    </interactant>
    <interactant intactId="EBI-10192441">
        <id>Q86VR2</id>
        <label>RETREG3</label>
    </interactant>
    <organismsDiffer>false</organismsDiffer>
    <experiments>3</experiments>
</comment>
<comment type="interaction">
    <interactant intactId="EBI-3221827">
        <id>O15400</id>
    </interactant>
    <interactant intactId="EBI-12375429">
        <id>Q7Z5B4-5</id>
        <label>RIC3</label>
    </interactant>
    <organismsDiffer>false</organismsDiffer>
    <experiments>3</experiments>
</comment>
<comment type="interaction">
    <interactant intactId="EBI-3221827">
        <id>O15400</id>
    </interactant>
    <interactant intactId="EBI-3920694">
        <id>Q9NR31</id>
        <label>SAR1A</label>
    </interactant>
    <organismsDiffer>false</organismsDiffer>
    <experiments>3</experiments>
</comment>
<comment type="interaction">
    <interactant intactId="EBI-3221827">
        <id>O15400</id>
    </interactant>
    <interactant intactId="EBI-3923031">
        <id>Q14973</id>
        <label>SLC10A1</label>
    </interactant>
    <organismsDiffer>false</organismsDiffer>
    <experiments>3</experiments>
</comment>
<comment type="interaction">
    <interactant intactId="EBI-3221827">
        <id>O15400</id>
    </interactant>
    <interactant intactId="EBI-18159983">
        <id>Q3KNW5</id>
        <label>SLC10A6</label>
    </interactant>
    <organismsDiffer>false</organismsDiffer>
    <experiments>3</experiments>
</comment>
<comment type="interaction">
    <interactant intactId="EBI-3221827">
        <id>O15400</id>
    </interactant>
    <interactant intactId="EBI-712466">
        <id>Q16623</id>
        <label>STX1A</label>
    </interactant>
    <organismsDiffer>false</organismsDiffer>
    <experiments>3</experiments>
</comment>
<comment type="interaction">
    <interactant intactId="EBI-3221827">
        <id>O15400</id>
    </interactant>
    <interactant intactId="EBI-11956649">
        <id>P32856-2</id>
        <label>STX2</label>
    </interactant>
    <organismsDiffer>false</organismsDiffer>
    <experiments>3</experiments>
</comment>
<comment type="interaction">
    <interactant intactId="EBI-3221827">
        <id>O15400</id>
    </interactant>
    <interactant intactId="EBI-744942">
        <id>Q12846</id>
        <label>STX4</label>
    </interactant>
    <organismsDiffer>false</organismsDiffer>
    <experiments>9</experiments>
</comment>
<comment type="interaction">
    <interactant intactId="EBI-3221827">
        <id>O15400</id>
    </interactant>
    <interactant intactId="EBI-6448756">
        <id>Q96DZ7</id>
        <label>TM4SF19</label>
    </interactant>
    <organismsDiffer>false</organismsDiffer>
    <experiments>3</experiments>
</comment>
<comment type="interaction">
    <interactant intactId="EBI-3221827">
        <id>O15400</id>
    </interactant>
    <interactant intactId="EBI-6269551">
        <id>Q6UW68</id>
        <label>TMEM205</label>
    </interactant>
    <organismsDiffer>false</organismsDiffer>
    <experiments>3</experiments>
</comment>
<comment type="interaction">
    <interactant intactId="EBI-3221827">
        <id>O15400</id>
    </interactant>
    <interactant intactId="EBI-18172866">
        <id>Q24JQ0</id>
        <label>TMEM241</label>
    </interactant>
    <organismsDiffer>false</organismsDiffer>
    <experiments>3</experiments>
</comment>
<comment type="interaction">
    <interactant intactId="EBI-3221827">
        <id>O15400</id>
    </interactant>
    <interactant intactId="EBI-17555467">
        <id>Q0VDI3</id>
        <label>TMEM267</label>
    </interactant>
    <organismsDiffer>false</organismsDiffer>
    <experiments>3</experiments>
</comment>
<comment type="interaction">
    <interactant intactId="EBI-3221827">
        <id>O15400</id>
    </interactant>
    <interactant intactId="EBI-11742770">
        <id>Q96HE8</id>
        <label>TMEM80</label>
    </interactant>
    <organismsDiffer>false</organismsDiffer>
    <experiments>3</experiments>
</comment>
<comment type="interaction">
    <interactant intactId="EBI-3221827">
        <id>O15400</id>
    </interactant>
    <interactant intactId="EBI-12345267">
        <id>O15393-2</id>
        <label>TMPRSS2</label>
    </interactant>
    <organismsDiffer>false</organismsDiffer>
    <experiments>4</experiments>
</comment>
<comment type="interaction">
    <interactant intactId="EBI-3221827">
        <id>O15400</id>
    </interactant>
    <interactant intactId="EBI-6447886">
        <id>Q9Y320</id>
        <label>TMX2</label>
    </interactant>
    <organismsDiffer>false</organismsDiffer>
    <experiments>3</experiments>
</comment>
<comment type="interaction">
    <interactant intactId="EBI-3221827">
        <id>O15400</id>
    </interactant>
    <interactant intactId="EBI-727028">
        <id>Q9BV40</id>
        <label>VAMP8</label>
    </interactant>
    <organismsDiffer>false</organismsDiffer>
    <experiments>5</experiments>
</comment>
<comment type="interaction">
    <interactant intactId="EBI-3221827">
        <id>O15400</id>
    </interactant>
    <interactant intactId="EBI-373380">
        <id>Q9H270</id>
        <label>VPS11</label>
    </interactant>
    <organismsDiffer>false</organismsDiffer>
    <experiments>2</experiments>
</comment>
<comment type="interaction">
    <interactant intactId="EBI-3221827">
        <id>O15400</id>
    </interactant>
    <interactant intactId="EBI-1053363">
        <id>Q9P253</id>
        <label>VPS18</label>
    </interactant>
    <organismsDiffer>false</organismsDiffer>
    <experiments>2</experiments>
</comment>
<comment type="interaction">
    <interactant intactId="EBI-3221827">
        <id>O15400</id>
    </interactant>
    <interactant intactId="EBI-4402903">
        <id>O15498</id>
        <label>YKT6</label>
    </interactant>
    <organismsDiffer>false</organismsDiffer>
    <experiments>4</experiments>
</comment>
<comment type="interaction">
    <interactant intactId="EBI-3221827">
        <id>O15400</id>
    </interactant>
    <interactant intactId="EBI-3892947">
        <id>Q5T4F4</id>
        <label>ZFYVE27</label>
    </interactant>
    <organismsDiffer>false</organismsDiffer>
    <experiments>3</experiments>
</comment>
<comment type="subcellular location">
    <subcellularLocation>
        <location evidence="1">Early endosome membrane</location>
        <topology evidence="1">Single-pass type IV membrane protein</topology>
    </subcellularLocation>
</comment>
<comment type="alternative products">
    <event type="alternative splicing"/>
    <isoform>
        <id>O15400-1</id>
        <name>1</name>
        <sequence type="displayed"/>
    </isoform>
    <isoform>
        <id>O15400-2</id>
        <name>2</name>
        <sequence type="described" ref="VSP_012938"/>
    </isoform>
</comment>
<comment type="tissue specificity">
    <text>Highest expression is found in placenta followed by heart, skeletal muscle, kidney and brain. Low expression is found in pancreas, lung and liver.</text>
</comment>
<comment type="similarity">
    <text evidence="8">Belongs to the syntaxin family.</text>
</comment>
<sequence length="261" mass="29816">MSYTPGVGGDPAQLAQRISSNIQKITQCSVEIQRTLNQLGTPQDSPELRQQLQQKQQYTNQLAKETDKYIKEFGSLPTTPSEQRQRKIQKDRLVAEFTTSLTNFQKVQRQAAEREKEFVARVRASSRVSGSFPEDSSKERNLVSWESQTQPQVQVQDEEITEDDLRLIHERESSIRQLEADIMDINEIFKDLGMMIHEQGDVIDSIEANVENAEVHVQQANQQLSRAADYQRKSRKTLCIIILILVIGVAIISLIIWGLNH</sequence>